<reference key="1">
    <citation type="journal article" date="2003" name="Genome Res.">
        <title>Genome sequence of an M3 strain of Streptococcus pyogenes reveals a large-scale genomic rearrangement in invasive strains and new insights into phage evolution.</title>
        <authorList>
            <person name="Nakagawa I."/>
            <person name="Kurokawa K."/>
            <person name="Yamashita A."/>
            <person name="Nakata M."/>
            <person name="Tomiyasu Y."/>
            <person name="Okahashi N."/>
            <person name="Kawabata S."/>
            <person name="Yamazaki K."/>
            <person name="Shiba T."/>
            <person name="Yasunaga T."/>
            <person name="Hayashi H."/>
            <person name="Hattori M."/>
            <person name="Hamada S."/>
        </authorList>
    </citation>
    <scope>NUCLEOTIDE SEQUENCE [LARGE SCALE GENOMIC DNA]</scope>
    <source>
        <strain>SSI-1</strain>
    </source>
</reference>
<keyword id="KW-0067">ATP-binding</keyword>
<keyword id="KW-0460">Magnesium</keyword>
<keyword id="KW-0479">Metal-binding</keyword>
<keyword id="KW-0547">Nucleotide-binding</keyword>
<keyword id="KW-0548">Nucleotidyltransferase</keyword>
<keyword id="KW-0692">RNA repair</keyword>
<keyword id="KW-0694">RNA-binding</keyword>
<keyword id="KW-0808">Transferase</keyword>
<keyword id="KW-0819">tRNA processing</keyword>
<sequence length="402" mass="46069">MKLMTMPSEFQKALPILTKIKEAGYEAYFVGGSVRDVLLERPIHDVDIATSSYPEETKAIFNRTVDVGIEHGTVLVLENGGEYEITTFRTEDVYVDYRRPSQVSFVRSLEEDLKRRDFTVNALALDENGQVIDKFRGLIDLEQKRLRAVGKAEERFEEDALRIMRGFRFAASLDFDIEAATFEAMRSHSPLLEKISVERSFTEFDKLLMAPHWRKGISAMIACQAYDYLPGLKQQEAGLNHLIVSLKDNFTFSDHHQAWAYVMISLAIEDPKSFLKAWKTSNDFQRYVTKLIALYRIRQERSFEKLDIYQYGKEMASLVEGLRKAQSLSVDMDHIEALDQALAIHNKYDIVLNGSHLIKDFGMKPGPQLGLMLEKVELAIVEGRLDNDFTTIEAFVREELAT</sequence>
<evidence type="ECO:0000255" key="1">
    <source>
        <dbReference type="HAMAP-Rule" id="MF_01263"/>
    </source>
</evidence>
<comment type="function">
    <text evidence="1">Catalyzes the addition and repair of the essential 3'-terminal CCA sequence in tRNAs without using a nucleic acid template. Adds these three nucleotides in the order of C, C, and A to the tRNA nucleotide-73, using CTP and ATP as substrates and producing inorganic pyrophosphate. tRNA 3'-terminal CCA addition is required both for tRNA processing and repair. Also involved in tRNA surveillance by mediating tandem CCA addition to generate a CCACCA at the 3' terminus of unstable tRNAs. While stable tRNAs receive only 3'-terminal CCA, unstable tRNAs are marked with CCACCA and rapidly degraded.</text>
</comment>
<comment type="catalytic activity">
    <reaction evidence="1">
        <text>a tRNA precursor + 2 CTP + ATP = a tRNA with a 3' CCA end + 3 diphosphate</text>
        <dbReference type="Rhea" id="RHEA:14433"/>
        <dbReference type="Rhea" id="RHEA-COMP:10465"/>
        <dbReference type="Rhea" id="RHEA-COMP:10468"/>
        <dbReference type="ChEBI" id="CHEBI:30616"/>
        <dbReference type="ChEBI" id="CHEBI:33019"/>
        <dbReference type="ChEBI" id="CHEBI:37563"/>
        <dbReference type="ChEBI" id="CHEBI:74896"/>
        <dbReference type="ChEBI" id="CHEBI:83071"/>
        <dbReference type="EC" id="2.7.7.72"/>
    </reaction>
</comment>
<comment type="catalytic activity">
    <reaction evidence="1">
        <text>a tRNA with a 3' CCA end + 2 CTP + ATP = a tRNA with a 3' CCACCA end + 3 diphosphate</text>
        <dbReference type="Rhea" id="RHEA:76235"/>
        <dbReference type="Rhea" id="RHEA-COMP:10468"/>
        <dbReference type="Rhea" id="RHEA-COMP:18655"/>
        <dbReference type="ChEBI" id="CHEBI:30616"/>
        <dbReference type="ChEBI" id="CHEBI:33019"/>
        <dbReference type="ChEBI" id="CHEBI:37563"/>
        <dbReference type="ChEBI" id="CHEBI:83071"/>
        <dbReference type="ChEBI" id="CHEBI:195187"/>
    </reaction>
    <physiologicalReaction direction="left-to-right" evidence="1">
        <dbReference type="Rhea" id="RHEA:76236"/>
    </physiologicalReaction>
</comment>
<comment type="cofactor">
    <cofactor evidence="1">
        <name>Mg(2+)</name>
        <dbReference type="ChEBI" id="CHEBI:18420"/>
    </cofactor>
</comment>
<comment type="subunit">
    <text evidence="1">Homodimer.</text>
</comment>
<comment type="miscellaneous">
    <text evidence="1">A single active site specifically recognizes both ATP and CTP and is responsible for their addition.</text>
</comment>
<comment type="similarity">
    <text evidence="1">Belongs to the tRNA nucleotidyltransferase/poly(A) polymerase family. Bacterial CCA-adding enzyme type 3 subfamily.</text>
</comment>
<dbReference type="EC" id="2.7.7.72" evidence="1"/>
<dbReference type="EMBL" id="BA000034">
    <property type="protein sequence ID" value="BAC64361.1"/>
    <property type="molecule type" value="Genomic_DNA"/>
</dbReference>
<dbReference type="RefSeq" id="WP_002990193.1">
    <property type="nucleotide sequence ID" value="NC_004606.1"/>
</dbReference>
<dbReference type="SMR" id="P0DA19"/>
<dbReference type="KEGG" id="sps:SPs1266"/>
<dbReference type="HOGENOM" id="CLU_015961_3_1_9"/>
<dbReference type="GO" id="GO:0005524">
    <property type="term" value="F:ATP binding"/>
    <property type="evidence" value="ECO:0007669"/>
    <property type="project" value="UniProtKB-UniRule"/>
</dbReference>
<dbReference type="GO" id="GO:0004810">
    <property type="term" value="F:CCA tRNA nucleotidyltransferase activity"/>
    <property type="evidence" value="ECO:0007669"/>
    <property type="project" value="UniProtKB-UniRule"/>
</dbReference>
<dbReference type="GO" id="GO:0000287">
    <property type="term" value="F:magnesium ion binding"/>
    <property type="evidence" value="ECO:0007669"/>
    <property type="project" value="UniProtKB-UniRule"/>
</dbReference>
<dbReference type="GO" id="GO:0000049">
    <property type="term" value="F:tRNA binding"/>
    <property type="evidence" value="ECO:0007669"/>
    <property type="project" value="UniProtKB-UniRule"/>
</dbReference>
<dbReference type="GO" id="GO:0042245">
    <property type="term" value="P:RNA repair"/>
    <property type="evidence" value="ECO:0007669"/>
    <property type="project" value="UniProtKB-KW"/>
</dbReference>
<dbReference type="GO" id="GO:0001680">
    <property type="term" value="P:tRNA 3'-terminal CCA addition"/>
    <property type="evidence" value="ECO:0007669"/>
    <property type="project" value="UniProtKB-UniRule"/>
</dbReference>
<dbReference type="CDD" id="cd05398">
    <property type="entry name" value="NT_ClassII-CCAase"/>
    <property type="match status" value="1"/>
</dbReference>
<dbReference type="Gene3D" id="1.10.110.30">
    <property type="match status" value="1"/>
</dbReference>
<dbReference type="Gene3D" id="1.10.246.80">
    <property type="match status" value="1"/>
</dbReference>
<dbReference type="Gene3D" id="1.20.58.560">
    <property type="match status" value="1"/>
</dbReference>
<dbReference type="Gene3D" id="3.30.460.10">
    <property type="entry name" value="Beta Polymerase, domain 2"/>
    <property type="match status" value="1"/>
</dbReference>
<dbReference type="HAMAP" id="MF_01263">
    <property type="entry name" value="CCA_bact_type3"/>
    <property type="match status" value="1"/>
</dbReference>
<dbReference type="InterPro" id="IPR050264">
    <property type="entry name" value="Bact_CCA-adding_enz_type3_sf"/>
</dbReference>
<dbReference type="InterPro" id="IPR032810">
    <property type="entry name" value="CCA-adding_enz_C"/>
</dbReference>
<dbReference type="InterPro" id="IPR023068">
    <property type="entry name" value="CCA-adding_enz_firmicutes"/>
</dbReference>
<dbReference type="InterPro" id="IPR043519">
    <property type="entry name" value="NT_sf"/>
</dbReference>
<dbReference type="InterPro" id="IPR002646">
    <property type="entry name" value="PolA_pol_head_dom"/>
</dbReference>
<dbReference type="InterPro" id="IPR032828">
    <property type="entry name" value="PolyA_RNA-bd"/>
</dbReference>
<dbReference type="NCBIfam" id="NF009814">
    <property type="entry name" value="PRK13299.1"/>
    <property type="match status" value="1"/>
</dbReference>
<dbReference type="PANTHER" id="PTHR46173">
    <property type="entry name" value="CCA TRNA NUCLEOTIDYLTRANSFERASE 1, MITOCHONDRIAL"/>
    <property type="match status" value="1"/>
</dbReference>
<dbReference type="PANTHER" id="PTHR46173:SF1">
    <property type="entry name" value="CCA TRNA NUCLEOTIDYLTRANSFERASE 1, MITOCHONDRIAL"/>
    <property type="match status" value="1"/>
</dbReference>
<dbReference type="Pfam" id="PF01743">
    <property type="entry name" value="PolyA_pol"/>
    <property type="match status" value="1"/>
</dbReference>
<dbReference type="Pfam" id="PF12627">
    <property type="entry name" value="PolyA_pol_RNAbd"/>
    <property type="match status" value="1"/>
</dbReference>
<dbReference type="Pfam" id="PF13735">
    <property type="entry name" value="tRNA_NucTran2_2"/>
    <property type="match status" value="1"/>
</dbReference>
<dbReference type="SUPFAM" id="SSF81301">
    <property type="entry name" value="Nucleotidyltransferase"/>
    <property type="match status" value="1"/>
</dbReference>
<dbReference type="SUPFAM" id="SSF81891">
    <property type="entry name" value="Poly A polymerase C-terminal region-like"/>
    <property type="match status" value="1"/>
</dbReference>
<feature type="chain" id="PRO_0000411297" description="CCA-adding enzyme">
    <location>
        <begin position="1"/>
        <end position="402"/>
    </location>
</feature>
<feature type="binding site" evidence="1">
    <location>
        <position position="32"/>
    </location>
    <ligand>
        <name>ATP</name>
        <dbReference type="ChEBI" id="CHEBI:30616"/>
    </ligand>
</feature>
<feature type="binding site" evidence="1">
    <location>
        <position position="32"/>
    </location>
    <ligand>
        <name>CTP</name>
        <dbReference type="ChEBI" id="CHEBI:37563"/>
    </ligand>
</feature>
<feature type="binding site" evidence="1">
    <location>
        <position position="35"/>
    </location>
    <ligand>
        <name>ATP</name>
        <dbReference type="ChEBI" id="CHEBI:30616"/>
    </ligand>
</feature>
<feature type="binding site" evidence="1">
    <location>
        <position position="35"/>
    </location>
    <ligand>
        <name>CTP</name>
        <dbReference type="ChEBI" id="CHEBI:37563"/>
    </ligand>
</feature>
<feature type="binding site" evidence="1">
    <location>
        <position position="45"/>
    </location>
    <ligand>
        <name>Mg(2+)</name>
        <dbReference type="ChEBI" id="CHEBI:18420"/>
    </ligand>
</feature>
<feature type="binding site" evidence="1">
    <location>
        <position position="47"/>
    </location>
    <ligand>
        <name>Mg(2+)</name>
        <dbReference type="ChEBI" id="CHEBI:18420"/>
    </ligand>
</feature>
<feature type="binding site" evidence="1">
    <location>
        <position position="116"/>
    </location>
    <ligand>
        <name>ATP</name>
        <dbReference type="ChEBI" id="CHEBI:30616"/>
    </ligand>
</feature>
<feature type="binding site" evidence="1">
    <location>
        <position position="116"/>
    </location>
    <ligand>
        <name>CTP</name>
        <dbReference type="ChEBI" id="CHEBI:37563"/>
    </ligand>
</feature>
<feature type="binding site" evidence="1">
    <location>
        <position position="159"/>
    </location>
    <ligand>
        <name>ATP</name>
        <dbReference type="ChEBI" id="CHEBI:30616"/>
    </ligand>
</feature>
<feature type="binding site" evidence="1">
    <location>
        <position position="159"/>
    </location>
    <ligand>
        <name>CTP</name>
        <dbReference type="ChEBI" id="CHEBI:37563"/>
    </ligand>
</feature>
<feature type="binding site" evidence="1">
    <location>
        <position position="162"/>
    </location>
    <ligand>
        <name>ATP</name>
        <dbReference type="ChEBI" id="CHEBI:30616"/>
    </ligand>
</feature>
<feature type="binding site" evidence="1">
    <location>
        <position position="162"/>
    </location>
    <ligand>
        <name>CTP</name>
        <dbReference type="ChEBI" id="CHEBI:37563"/>
    </ligand>
</feature>
<feature type="binding site" evidence="1">
    <location>
        <position position="165"/>
    </location>
    <ligand>
        <name>ATP</name>
        <dbReference type="ChEBI" id="CHEBI:30616"/>
    </ligand>
</feature>
<feature type="binding site" evidence="1">
    <location>
        <position position="165"/>
    </location>
    <ligand>
        <name>CTP</name>
        <dbReference type="ChEBI" id="CHEBI:37563"/>
    </ligand>
</feature>
<feature type="binding site" evidence="1">
    <location>
        <position position="168"/>
    </location>
    <ligand>
        <name>ATP</name>
        <dbReference type="ChEBI" id="CHEBI:30616"/>
    </ligand>
</feature>
<feature type="binding site" evidence="1">
    <location>
        <position position="168"/>
    </location>
    <ligand>
        <name>CTP</name>
        <dbReference type="ChEBI" id="CHEBI:37563"/>
    </ligand>
</feature>
<gene>
    <name evidence="1" type="primary">cca</name>
    <name type="ordered locus">SPs1266</name>
</gene>
<name>CCA_STRPQ</name>
<protein>
    <recommendedName>
        <fullName evidence="1">CCA-adding enzyme</fullName>
        <ecNumber evidence="1">2.7.7.72</ecNumber>
    </recommendedName>
    <alternativeName>
        <fullName evidence="1">CCA tRNA nucleotidyltransferase</fullName>
    </alternativeName>
    <alternativeName>
        <fullName evidence="1">tRNA CCA-pyrophosphorylase</fullName>
    </alternativeName>
    <alternativeName>
        <fullName evidence="1">tRNA adenylyl-/cytidylyl- transferase</fullName>
    </alternativeName>
    <alternativeName>
        <fullName evidence="1">tRNA nucleotidyltransferase</fullName>
    </alternativeName>
    <alternativeName>
        <fullName evidence="1">tRNA-NT</fullName>
    </alternativeName>
</protein>
<proteinExistence type="inferred from homology"/>
<accession>P0DA19</accession>
<accession>Q79WV5</accession>
<accession>Q8K7W5</accession>
<organism>
    <name type="scientific">Streptococcus pyogenes serotype M3 (strain SSI-1)</name>
    <dbReference type="NCBI Taxonomy" id="193567"/>
    <lineage>
        <taxon>Bacteria</taxon>
        <taxon>Bacillati</taxon>
        <taxon>Bacillota</taxon>
        <taxon>Bacilli</taxon>
        <taxon>Lactobacillales</taxon>
        <taxon>Streptococcaceae</taxon>
        <taxon>Streptococcus</taxon>
    </lineage>
</organism>